<reference key="1">
    <citation type="journal article" date="2009" name="Proc. Natl. Acad. Sci. U.S.A.">
        <title>Biogeography of the Sulfolobus islandicus pan-genome.</title>
        <authorList>
            <person name="Reno M.L."/>
            <person name="Held N.L."/>
            <person name="Fields C.J."/>
            <person name="Burke P.V."/>
            <person name="Whitaker R.J."/>
        </authorList>
    </citation>
    <scope>NUCLEOTIDE SEQUENCE [LARGE SCALE GENOMIC DNA]</scope>
    <source>
        <strain>L.S.2.15 / Lassen #1</strain>
    </source>
</reference>
<dbReference type="EMBL" id="CP001399">
    <property type="protein sequence ID" value="ACP36836.1"/>
    <property type="molecule type" value="Genomic_DNA"/>
</dbReference>
<dbReference type="RefSeq" id="WP_012714675.1">
    <property type="nucleotide sequence ID" value="NC_012589.1"/>
</dbReference>
<dbReference type="SMR" id="C3MN93"/>
<dbReference type="GeneID" id="15299120"/>
<dbReference type="GeneID" id="7811300"/>
<dbReference type="KEGG" id="sis:LS215_2903"/>
<dbReference type="HOGENOM" id="CLU_052299_1_0_2"/>
<dbReference type="OrthoDB" id="34139at2157"/>
<dbReference type="Proteomes" id="UP000001747">
    <property type="component" value="Chromosome"/>
</dbReference>
<dbReference type="GO" id="GO:0003677">
    <property type="term" value="F:DNA binding"/>
    <property type="evidence" value="ECO:0007669"/>
    <property type="project" value="InterPro"/>
</dbReference>
<dbReference type="CDD" id="cd22357">
    <property type="entry name" value="SfsA-like"/>
    <property type="match status" value="1"/>
</dbReference>
<dbReference type="Gene3D" id="2.40.50.580">
    <property type="match status" value="1"/>
</dbReference>
<dbReference type="Gene3D" id="3.40.1350.60">
    <property type="match status" value="1"/>
</dbReference>
<dbReference type="HAMAP" id="MF_00095">
    <property type="entry name" value="SfsA"/>
    <property type="match status" value="1"/>
</dbReference>
<dbReference type="InterPro" id="IPR005224">
    <property type="entry name" value="SfsA"/>
</dbReference>
<dbReference type="InterPro" id="IPR040452">
    <property type="entry name" value="SfsA_C"/>
</dbReference>
<dbReference type="InterPro" id="IPR041465">
    <property type="entry name" value="SfsA_N"/>
</dbReference>
<dbReference type="NCBIfam" id="TIGR00230">
    <property type="entry name" value="sfsA"/>
    <property type="match status" value="1"/>
</dbReference>
<dbReference type="PANTHER" id="PTHR30545">
    <property type="entry name" value="SUGAR FERMENTATION STIMULATION PROTEIN A"/>
    <property type="match status" value="1"/>
</dbReference>
<dbReference type="PANTHER" id="PTHR30545:SF2">
    <property type="entry name" value="SUGAR FERMENTATION STIMULATION PROTEIN A"/>
    <property type="match status" value="1"/>
</dbReference>
<dbReference type="Pfam" id="PF03749">
    <property type="entry name" value="SfsA"/>
    <property type="match status" value="1"/>
</dbReference>
<dbReference type="Pfam" id="PF17746">
    <property type="entry name" value="SfsA_N"/>
    <property type="match status" value="1"/>
</dbReference>
<comment type="similarity">
    <text evidence="1">Belongs to the SfsA family.</text>
</comment>
<organism>
    <name type="scientific">Saccharolobus islandicus (strain L.S.2.15 / Lassen #1)</name>
    <name type="common">Sulfolobus islandicus</name>
    <dbReference type="NCBI Taxonomy" id="429572"/>
    <lineage>
        <taxon>Archaea</taxon>
        <taxon>Thermoproteota</taxon>
        <taxon>Thermoprotei</taxon>
        <taxon>Sulfolobales</taxon>
        <taxon>Sulfolobaceae</taxon>
        <taxon>Saccharolobus</taxon>
    </lineage>
</organism>
<gene>
    <name evidence="1" type="primary">sfsA</name>
    <name type="ordered locus">LS215_2903</name>
</gene>
<protein>
    <recommendedName>
        <fullName evidence="1">Sugar fermentation stimulation protein homolog</fullName>
    </recommendedName>
</protein>
<proteinExistence type="inferred from homology"/>
<name>SFSA_SACI2</name>
<feature type="chain" id="PRO_1000202728" description="Sugar fermentation stimulation protein homolog">
    <location>
        <begin position="1"/>
        <end position="240"/>
    </location>
</feature>
<sequence length="240" mass="28005">MNERDSRNQIGDLPFRVKEGFSVYEFIEQLYEAHVVERINRFLVKVTFNGKEFLAHLHDPGRLKDLIYPGNLVLIRETKGYKTKFSITAAYSNSRFVVLDSRLHNIIASKFLPEAYEKEIKVGNSRIDFKYDNTYLEVKGCTLVENEIAYFPDAPTERGRRHLKELRELMKKGFNSILLILVMRDDAKCFLPNEKTDPKFSIEFWNSINEGLNVNIKTFKLVGNKIIYVRDIPLCKTNLT</sequence>
<evidence type="ECO:0000255" key="1">
    <source>
        <dbReference type="HAMAP-Rule" id="MF_00095"/>
    </source>
</evidence>
<accession>C3MN93</accession>